<keyword id="KW-0007">Acetylation</keyword>
<keyword id="KW-1003">Cell membrane</keyword>
<keyword id="KW-0903">Direct protein sequencing</keyword>
<keyword id="KW-0375">Hydrogen ion transport</keyword>
<keyword id="KW-0406">Ion transport</keyword>
<keyword id="KW-0472">Membrane</keyword>
<keyword id="KW-1185">Reference proteome</keyword>
<keyword id="KW-0813">Transport</keyword>
<evidence type="ECO:0000250" key="1">
    <source>
        <dbReference type="UniProtKB" id="O75348"/>
    </source>
</evidence>
<evidence type="ECO:0000250" key="2">
    <source>
        <dbReference type="UniProtKB" id="Q0VCV6"/>
    </source>
</evidence>
<evidence type="ECO:0000256" key="3">
    <source>
        <dbReference type="SAM" id="MobiDB-lite"/>
    </source>
</evidence>
<evidence type="ECO:0000269" key="4">
    <source>
    </source>
</evidence>
<evidence type="ECO:0000305" key="5"/>
<reference key="1">
    <citation type="journal article" date="1996" name="J. Exp. Biol.">
        <title>A novel subunit of vacuolar H(+)-ATPase related to the b subunit of F-ATPases.</title>
        <authorList>
            <person name="Supekova L."/>
            <person name="Sbia M."/>
            <person name="Supek F."/>
            <person name="Ma Y."/>
            <person name="Nelson N."/>
        </authorList>
    </citation>
    <scope>NUCLEOTIDE SEQUENCE [MRNA]</scope>
    <scope>PROTEIN SEQUENCE OF 83-99</scope>
    <source>
        <tissue>Adrenal medulla</tissue>
    </source>
</reference>
<reference key="2">
    <citation type="submission" date="2005-11" db="EMBL/GenBank/DDBJ databases">
        <authorList>
            <consortium name="NIH - Mammalian Gene Collection (MGC) project"/>
        </authorList>
    </citation>
    <scope>NUCLEOTIDE SEQUENCE [LARGE SCALE MRNA]</scope>
    <source>
        <strain>Crossbred X Angus</strain>
        <tissue>Liver</tissue>
    </source>
</reference>
<reference key="3">
    <citation type="journal article" date="1997" name="J. Biol. Chem.">
        <title>Subunit G of the vacuolar proton pump. Molecular characterization and functional expression.</title>
        <authorList>
            <person name="Crider B.P."/>
            <person name="Andersen P."/>
            <person name="White A.E."/>
            <person name="Zhou Z."/>
            <person name="Li X."/>
            <person name="Mattsson J.P."/>
            <person name="Lundberg L."/>
            <person name="Keeling D.J."/>
            <person name="Xie X.S."/>
            <person name="Stone D.K."/>
            <person name="Peng S.B."/>
        </authorList>
    </citation>
    <scope>TISSUE SPECIFICITY</scope>
</reference>
<comment type="function">
    <text evidence="1 2">Subunit of the V1 complex of vacuolar(H+)-ATPase (V-ATPase), a multisubunit enzyme composed of a peripheral complex (V1) that hydrolyzes ATP and a membrane integral complex (V0) that translocates protons (By similarity). V-ATPase is responsible for acidifying and maintaining the pH of intracellular compartments and in some cell types, is targeted to the plasma membrane, where it is responsible for acidifying the extracellular environment (By similarity). In aerobic conditions, involved in intracellular iron homeostasis, thus triggering the activity of Fe(2+) prolyl hydroxylase (PHD) enzymes, and leading to HIF1A hydroxylation and subsequent proteasomal degradation (By similarity).</text>
</comment>
<comment type="subunit">
    <text evidence="2">V-ATPase is a heteromultimeric enzyme made up of two complexes: the ATP-hydrolytic V1 complex and the proton translocation V0 complex. The V1 complex consists of three catalytic AB heterodimers that form a heterohexamer, three peripheral stalks each consisting of EG heterodimers, one central rotor including subunits D and F, and the regulatory subunits C and H. The proton translocation complex V0 consists of the proton transport subunit a, a ring of proteolipid subunits c9c'', rotary subunit d, subunits e and f, and the accessory subunits ATP6AP1/Ac45 and ATP6AP2/PRR.</text>
</comment>
<comment type="subcellular location">
    <subcellularLocation>
        <location evidence="1">Apical cell membrane</location>
    </subcellularLocation>
</comment>
<comment type="tissue specificity">
    <text evidence="4">Brain, heart, kidney and spleen.</text>
</comment>
<comment type="similarity">
    <text evidence="5">Belongs to the V-ATPase G subunit family.</text>
</comment>
<name>VATG1_BOVIN</name>
<accession>P79251</accession>
<accession>Q32KN3</accession>
<sequence length="118" mass="13682">MASQSQGIQQLLQAEKRAAEKVSEARKRKNRRLKQAKEEAQAEVEQYRLQREKEFKAKEAAALGSHGSCSTEVEKDTQEKMTILQTYFQQNRDEVLDNLLAFVCDIRPEIHENYRING</sequence>
<proteinExistence type="evidence at protein level"/>
<organism>
    <name type="scientific">Bos taurus</name>
    <name type="common">Bovine</name>
    <dbReference type="NCBI Taxonomy" id="9913"/>
    <lineage>
        <taxon>Eukaryota</taxon>
        <taxon>Metazoa</taxon>
        <taxon>Chordata</taxon>
        <taxon>Craniata</taxon>
        <taxon>Vertebrata</taxon>
        <taxon>Euteleostomi</taxon>
        <taxon>Mammalia</taxon>
        <taxon>Eutheria</taxon>
        <taxon>Laurasiatheria</taxon>
        <taxon>Artiodactyla</taxon>
        <taxon>Ruminantia</taxon>
        <taxon>Pecora</taxon>
        <taxon>Bovidae</taxon>
        <taxon>Bovinae</taxon>
        <taxon>Bos</taxon>
    </lineage>
</organism>
<dbReference type="EMBL" id="S82464">
    <property type="protein sequence ID" value="AAB37487.1"/>
    <property type="molecule type" value="mRNA"/>
</dbReference>
<dbReference type="EMBL" id="BC110010">
    <property type="protein sequence ID" value="AAI10011.1"/>
    <property type="molecule type" value="mRNA"/>
</dbReference>
<dbReference type="RefSeq" id="NP_776670.1">
    <property type="nucleotide sequence ID" value="NM_174245.2"/>
</dbReference>
<dbReference type="SMR" id="P79251"/>
<dbReference type="CORUM" id="P79251"/>
<dbReference type="FunCoup" id="P79251">
    <property type="interactions" value="3151"/>
</dbReference>
<dbReference type="STRING" id="9913.ENSBTAP00000000240"/>
<dbReference type="PaxDb" id="9913-ENSBTAP00000000240"/>
<dbReference type="PeptideAtlas" id="P79251"/>
<dbReference type="Ensembl" id="ENSBTAT00000000240.6">
    <property type="protein sequence ID" value="ENSBTAP00000000240.4"/>
    <property type="gene ID" value="ENSBTAG00000000203.6"/>
</dbReference>
<dbReference type="GeneID" id="281641"/>
<dbReference type="KEGG" id="bta:281641"/>
<dbReference type="CTD" id="9550"/>
<dbReference type="VEuPathDB" id="HostDB:ENSBTAG00000000203"/>
<dbReference type="VGNC" id="VGNC:26324">
    <property type="gene designation" value="ATP6V1G1"/>
</dbReference>
<dbReference type="eggNOG" id="KOG1772">
    <property type="taxonomic scope" value="Eukaryota"/>
</dbReference>
<dbReference type="GeneTree" id="ENSGT00940000154399"/>
<dbReference type="HOGENOM" id="CLU_125101_1_1_1"/>
<dbReference type="InParanoid" id="P79251"/>
<dbReference type="OMA" id="ARKYRQD"/>
<dbReference type="OrthoDB" id="250802at2759"/>
<dbReference type="TreeFam" id="TF313777"/>
<dbReference type="Reactome" id="R-BTA-1222556">
    <property type="pathway name" value="ROS and RNS production in phagocytes"/>
</dbReference>
<dbReference type="Reactome" id="R-BTA-77387">
    <property type="pathway name" value="Insulin receptor recycling"/>
</dbReference>
<dbReference type="Reactome" id="R-BTA-917977">
    <property type="pathway name" value="Transferrin endocytosis and recycling"/>
</dbReference>
<dbReference type="Reactome" id="R-BTA-9639288">
    <property type="pathway name" value="Amino acids regulate mTORC1"/>
</dbReference>
<dbReference type="Reactome" id="R-BTA-983712">
    <property type="pathway name" value="Ion channel transport"/>
</dbReference>
<dbReference type="Proteomes" id="UP000009136">
    <property type="component" value="Chromosome 8"/>
</dbReference>
<dbReference type="Bgee" id="ENSBTAG00000000203">
    <property type="expression patterns" value="Expressed in adenohypophysis and 104 other cell types or tissues"/>
</dbReference>
<dbReference type="GO" id="GO:0016324">
    <property type="term" value="C:apical plasma membrane"/>
    <property type="evidence" value="ECO:0007669"/>
    <property type="project" value="UniProtKB-SubCell"/>
</dbReference>
<dbReference type="GO" id="GO:0005829">
    <property type="term" value="C:cytosol"/>
    <property type="evidence" value="ECO:0000250"/>
    <property type="project" value="UniProtKB"/>
</dbReference>
<dbReference type="GO" id="GO:0005765">
    <property type="term" value="C:lysosomal membrane"/>
    <property type="evidence" value="ECO:0007669"/>
    <property type="project" value="Ensembl"/>
</dbReference>
<dbReference type="GO" id="GO:0005886">
    <property type="term" value="C:plasma membrane"/>
    <property type="evidence" value="ECO:0000250"/>
    <property type="project" value="UniProtKB"/>
</dbReference>
<dbReference type="GO" id="GO:0030672">
    <property type="term" value="C:synaptic vesicle membrane"/>
    <property type="evidence" value="ECO:0000318"/>
    <property type="project" value="GO_Central"/>
</dbReference>
<dbReference type="GO" id="GO:0000221">
    <property type="term" value="C:vacuolar proton-transporting V-type ATPase, V1 domain"/>
    <property type="evidence" value="ECO:0000318"/>
    <property type="project" value="GO_Central"/>
</dbReference>
<dbReference type="GO" id="GO:0016887">
    <property type="term" value="F:ATP hydrolysis activity"/>
    <property type="evidence" value="ECO:0000318"/>
    <property type="project" value="GO_Central"/>
</dbReference>
<dbReference type="GO" id="GO:0051117">
    <property type="term" value="F:ATPase binding"/>
    <property type="evidence" value="ECO:0007669"/>
    <property type="project" value="Ensembl"/>
</dbReference>
<dbReference type="GO" id="GO:0046961">
    <property type="term" value="F:proton-transporting ATPase activity, rotational mechanism"/>
    <property type="evidence" value="ECO:0000318"/>
    <property type="project" value="GO_Central"/>
</dbReference>
<dbReference type="GO" id="GO:0036295">
    <property type="term" value="P:cellular response to increased oxygen levels"/>
    <property type="evidence" value="ECO:0000250"/>
    <property type="project" value="UniProtKB"/>
</dbReference>
<dbReference type="GO" id="GO:0006879">
    <property type="term" value="P:intracellular iron ion homeostasis"/>
    <property type="evidence" value="ECO:0000250"/>
    <property type="project" value="UniProtKB"/>
</dbReference>
<dbReference type="GO" id="GO:0097401">
    <property type="term" value="P:synaptic vesicle lumen acidification"/>
    <property type="evidence" value="ECO:0000318"/>
    <property type="project" value="GO_Central"/>
</dbReference>
<dbReference type="FunFam" id="1.20.5.2950:FF:000001">
    <property type="entry name" value="V-type proton ATPase subunit G"/>
    <property type="match status" value="1"/>
</dbReference>
<dbReference type="FunFam" id="1.20.5.620:FF:000004">
    <property type="entry name" value="V-type proton ATPase subunit G"/>
    <property type="match status" value="1"/>
</dbReference>
<dbReference type="Gene3D" id="1.20.5.2950">
    <property type="match status" value="1"/>
</dbReference>
<dbReference type="InterPro" id="IPR005124">
    <property type="entry name" value="V-ATPase_G"/>
</dbReference>
<dbReference type="NCBIfam" id="TIGR01147">
    <property type="entry name" value="V_ATP_synt_G"/>
    <property type="match status" value="1"/>
</dbReference>
<dbReference type="PANTHER" id="PTHR12713:SF12">
    <property type="entry name" value="V-TYPE PROTON ATPASE SUBUNIT G 1"/>
    <property type="match status" value="1"/>
</dbReference>
<dbReference type="PANTHER" id="PTHR12713">
    <property type="entry name" value="VACUOLAR ATP SYNTHASE SUBUNIT G"/>
    <property type="match status" value="1"/>
</dbReference>
<dbReference type="Pfam" id="PF03179">
    <property type="entry name" value="V-ATPase_G"/>
    <property type="match status" value="1"/>
</dbReference>
<feature type="initiator methionine" description="Removed" evidence="1">
    <location>
        <position position="1"/>
    </location>
</feature>
<feature type="chain" id="PRO_0000192895" description="V-type proton ATPase subunit G 1">
    <location>
        <begin position="2"/>
        <end position="118"/>
    </location>
</feature>
<feature type="region of interest" description="Disordered" evidence="3">
    <location>
        <begin position="19"/>
        <end position="42"/>
    </location>
</feature>
<feature type="modified residue" description="N-acetylalanine" evidence="1">
    <location>
        <position position="2"/>
    </location>
</feature>
<protein>
    <recommendedName>
        <fullName>V-type proton ATPase subunit G 1</fullName>
        <shortName>V-ATPase subunit G 1</shortName>
    </recommendedName>
    <alternativeName>
        <fullName>V-ATPase 13 kDa subunit 1</fullName>
    </alternativeName>
    <alternativeName>
        <fullName>Vacuolar proton pump subunit G 1</fullName>
    </alternativeName>
    <alternativeName>
        <fullName>Vacuolar proton pump subunit M16</fullName>
    </alternativeName>
</protein>
<gene>
    <name type="primary">ATP6V1G1</name>
    <name type="synonym">ATP6G</name>
    <name type="synonym">ATP6G1</name>
</gene>